<proteinExistence type="inferred from homology"/>
<dbReference type="EMBL" id="CP001321">
    <property type="protein sequence ID" value="ACL32605.1"/>
    <property type="molecule type" value="Genomic_DNA"/>
</dbReference>
<dbReference type="RefSeq" id="WP_005713376.1">
    <property type="nucleotide sequence ID" value="NC_011852.1"/>
</dbReference>
<dbReference type="SMR" id="B8F5K3"/>
<dbReference type="STRING" id="557723.HAPS_0980"/>
<dbReference type="GeneID" id="66619485"/>
<dbReference type="KEGG" id="hap:HAPS_0980"/>
<dbReference type="HOGENOM" id="CLU_097103_2_0_6"/>
<dbReference type="UniPathway" id="UPA00068"/>
<dbReference type="Proteomes" id="UP000006743">
    <property type="component" value="Chromosome"/>
</dbReference>
<dbReference type="GO" id="GO:0005737">
    <property type="term" value="C:cytoplasm"/>
    <property type="evidence" value="ECO:0007669"/>
    <property type="project" value="UniProtKB-SubCell"/>
</dbReference>
<dbReference type="GO" id="GO:0034618">
    <property type="term" value="F:arginine binding"/>
    <property type="evidence" value="ECO:0007669"/>
    <property type="project" value="InterPro"/>
</dbReference>
<dbReference type="GO" id="GO:0003677">
    <property type="term" value="F:DNA binding"/>
    <property type="evidence" value="ECO:0007669"/>
    <property type="project" value="UniProtKB-KW"/>
</dbReference>
<dbReference type="GO" id="GO:0003700">
    <property type="term" value="F:DNA-binding transcription factor activity"/>
    <property type="evidence" value="ECO:0007669"/>
    <property type="project" value="UniProtKB-UniRule"/>
</dbReference>
<dbReference type="GO" id="GO:0006526">
    <property type="term" value="P:L-arginine biosynthetic process"/>
    <property type="evidence" value="ECO:0007669"/>
    <property type="project" value="UniProtKB-UniPathway"/>
</dbReference>
<dbReference type="GO" id="GO:0051259">
    <property type="term" value="P:protein complex oligomerization"/>
    <property type="evidence" value="ECO:0007669"/>
    <property type="project" value="InterPro"/>
</dbReference>
<dbReference type="GO" id="GO:1900079">
    <property type="term" value="P:regulation of arginine biosynthetic process"/>
    <property type="evidence" value="ECO:0007669"/>
    <property type="project" value="UniProtKB-UniRule"/>
</dbReference>
<dbReference type="Gene3D" id="3.30.1360.40">
    <property type="match status" value="1"/>
</dbReference>
<dbReference type="Gene3D" id="1.10.10.10">
    <property type="entry name" value="Winged helix-like DNA-binding domain superfamily/Winged helix DNA-binding domain"/>
    <property type="match status" value="1"/>
</dbReference>
<dbReference type="HAMAP" id="MF_00173">
    <property type="entry name" value="Arg_repressor"/>
    <property type="match status" value="1"/>
</dbReference>
<dbReference type="InterPro" id="IPR001669">
    <property type="entry name" value="Arg_repress"/>
</dbReference>
<dbReference type="InterPro" id="IPR020899">
    <property type="entry name" value="Arg_repress_C"/>
</dbReference>
<dbReference type="InterPro" id="IPR036251">
    <property type="entry name" value="Arg_repress_C_sf"/>
</dbReference>
<dbReference type="InterPro" id="IPR020900">
    <property type="entry name" value="Arg_repress_DNA-bd"/>
</dbReference>
<dbReference type="InterPro" id="IPR036388">
    <property type="entry name" value="WH-like_DNA-bd_sf"/>
</dbReference>
<dbReference type="InterPro" id="IPR036390">
    <property type="entry name" value="WH_DNA-bd_sf"/>
</dbReference>
<dbReference type="NCBIfam" id="TIGR01529">
    <property type="entry name" value="argR_whole"/>
    <property type="match status" value="1"/>
</dbReference>
<dbReference type="NCBIfam" id="NF003457">
    <property type="entry name" value="PRK05066.1"/>
    <property type="match status" value="1"/>
</dbReference>
<dbReference type="PANTHER" id="PTHR34471">
    <property type="entry name" value="ARGININE REPRESSOR"/>
    <property type="match status" value="1"/>
</dbReference>
<dbReference type="PANTHER" id="PTHR34471:SF1">
    <property type="entry name" value="ARGININE REPRESSOR"/>
    <property type="match status" value="1"/>
</dbReference>
<dbReference type="Pfam" id="PF01316">
    <property type="entry name" value="Arg_repressor"/>
    <property type="match status" value="1"/>
</dbReference>
<dbReference type="Pfam" id="PF02863">
    <property type="entry name" value="Arg_repressor_C"/>
    <property type="match status" value="1"/>
</dbReference>
<dbReference type="PRINTS" id="PR01467">
    <property type="entry name" value="ARGREPRESSOR"/>
</dbReference>
<dbReference type="SUPFAM" id="SSF55252">
    <property type="entry name" value="C-terminal domain of arginine repressor"/>
    <property type="match status" value="1"/>
</dbReference>
<dbReference type="SUPFAM" id="SSF46785">
    <property type="entry name" value="Winged helix' DNA-binding domain"/>
    <property type="match status" value="1"/>
</dbReference>
<feature type="chain" id="PRO_1000123797" description="Arginine repressor">
    <location>
        <begin position="1"/>
        <end position="153"/>
    </location>
</feature>
<name>ARGR_GLAP5</name>
<reference key="1">
    <citation type="journal article" date="2009" name="J. Bacteriol.">
        <title>Complete genome sequence of Haemophilus parasuis SH0165.</title>
        <authorList>
            <person name="Yue M."/>
            <person name="Yang F."/>
            <person name="Yang J."/>
            <person name="Bei W."/>
            <person name="Cai X."/>
            <person name="Chen L."/>
            <person name="Dong J."/>
            <person name="Zhou R."/>
            <person name="Jin M."/>
            <person name="Jin Q."/>
            <person name="Chen H."/>
        </authorList>
    </citation>
    <scope>NUCLEOTIDE SEQUENCE [LARGE SCALE GENOMIC DNA]</scope>
    <source>
        <strain>SH0165</strain>
    </source>
</reference>
<protein>
    <recommendedName>
        <fullName evidence="1">Arginine repressor</fullName>
    </recommendedName>
</protein>
<organism>
    <name type="scientific">Glaesserella parasuis serovar 5 (strain SH0165)</name>
    <name type="common">Haemophilus parasuis</name>
    <dbReference type="NCBI Taxonomy" id="557723"/>
    <lineage>
        <taxon>Bacteria</taxon>
        <taxon>Pseudomonadati</taxon>
        <taxon>Pseudomonadota</taxon>
        <taxon>Gammaproteobacteria</taxon>
        <taxon>Pasteurellales</taxon>
        <taxon>Pasteurellaceae</taxon>
        <taxon>Glaesserella</taxon>
    </lineage>
</organism>
<sequence length="153" mass="16796">MEKLDSLNEAFKSLLREEKFGSQSEIVTALQEMGFEHINQSKVSRMLSKFGAVRTRNTKMEMVYHLPAELGIPTTSSPLRNLVIDIDHNESLIVVRTSPGAAQLIARLLDSMGKAEGILGTIAGDDTIFITPTRDTSISTLIATITELFDSSL</sequence>
<gene>
    <name evidence="1" type="primary">argR</name>
    <name type="ordered locus">HAPS_0980</name>
</gene>
<keyword id="KW-0028">Amino-acid biosynthesis</keyword>
<keyword id="KW-0055">Arginine biosynthesis</keyword>
<keyword id="KW-0963">Cytoplasm</keyword>
<keyword id="KW-0238">DNA-binding</keyword>
<keyword id="KW-1185">Reference proteome</keyword>
<keyword id="KW-0678">Repressor</keyword>
<keyword id="KW-0804">Transcription</keyword>
<keyword id="KW-0805">Transcription regulation</keyword>
<accession>B8F5K3</accession>
<comment type="function">
    <text evidence="1">Regulates arginine biosynthesis genes.</text>
</comment>
<comment type="pathway">
    <text>Amino-acid biosynthesis; L-arginine biosynthesis [regulation].</text>
</comment>
<comment type="subcellular location">
    <subcellularLocation>
        <location evidence="1">Cytoplasm</location>
    </subcellularLocation>
</comment>
<comment type="similarity">
    <text evidence="1">Belongs to the ArgR family.</text>
</comment>
<evidence type="ECO:0000255" key="1">
    <source>
        <dbReference type="HAMAP-Rule" id="MF_00173"/>
    </source>
</evidence>